<organismHost>
    <name type="scientific">Homo sapiens</name>
    <name type="common">Human</name>
    <dbReference type="NCBI Taxonomy" id="9606"/>
</organismHost>
<comment type="function">
    <text evidence="1">Enhances virion budding, by targeting human CD4 and Tetherin/BST2 to proteasome degradation. Degradation of CD4 prevents any unwanted premature interactions between viral Env and its receptor human CD4 in the endoplasmic reticulum. Degradation of antiretroviral protein Tetherin/BST2 is important for virion budding, as BST2 tethers new viral particles to the host cell membrane. Mechanistically, Vpu bridges either CD4 or BST2 to BTRC, a substrate recognition subunit of the Skp1/Cullin/F-box protein E3 ubiquitin ligase, induces their ubiquitination and subsequent proteasomal degradation. The alteration of the E3 ligase specificity by Vpu seems to interfere with the degradation of host IKBKB, leading to NF-kappa-B down-regulation and subsequent apoptosis. Acts as a viroporin that forms an oligomeric ion channel in membranes. Modulates the host DNA repair mechanisms to promote degradation of nuclear viral cDNA in cells that are already productively infected in order to suppress immune sensing and proviral hyper-integration (superinfection). Manipulates PML-NBs and modulates SUMOylation of host BLM protein thereby enhancing its DNA-end processing activity toward viral unintegrated linear DNA. Also inhibits RAD52-mediated homologous repair of viral cDNA, preventing the generation of dead-end circular forms of single copies of the long terminal repeat and permitting sustained nucleolytic attack.</text>
</comment>
<comment type="activity regulation">
    <text evidence="1">Ion channel activity is inhibited by hexamethylene amiloride in vitro.</text>
</comment>
<comment type="subunit">
    <text evidence="1">Homopentamer. Interacts with host CD4 and BRTC; these interactions induce proteasomal degradation of CD4. Interacts with host BST2; this interaction leads to the degradation of host BST2. Interacts with host FBXW11. Interacts with host AP1M1; this interaction plays a role in the mistrafficking and subsequent degradation of host BST2. Interacts with host RANBP2; this interaction allows Vpu to down-regulate host BLM sumoylation.</text>
</comment>
<comment type="subcellular location">
    <subcellularLocation>
        <location evidence="1">Host membrane</location>
        <topology evidence="1">Single-pass type I membrane protein</topology>
    </subcellularLocation>
</comment>
<comment type="domain">
    <text evidence="1">The N-terminus and transmembrane domains are required for self-oligomerization and proper virion budding, whereas the cytoplasmic domain is required for CD4 degradation. The cytoplasmic domain is composed of 2 amphipathic alpha helix that form a U-shape.</text>
</comment>
<comment type="PTM">
    <text evidence="1">Phosphorylated by host CK2. This phosphorylation is necessary for interaction with human BRCP and degradation of CD4 (By similarity).</text>
</comment>
<comment type="miscellaneous">
    <text>HIV-1 lineages are divided in three main groups, M (for Major), O (for Outlier), and N (for New, or Non-M, Non-O). The vast majority of strains found worldwide belong to the group M. Group O seems to be endemic to and largely confined to Cameroon and neighboring countries in West Central Africa, where these viruses represent a small minority of HIV-1 strains. The group N is represented by a limited number of isolates from Cameroonian persons. The group M is further subdivided in 9 clades or subtypes (A to D, F to H, J and K).</text>
</comment>
<comment type="similarity">
    <text evidence="3">Belongs to the HIV-1 VPU protein family.</text>
</comment>
<organism>
    <name type="scientific">Human immunodeficiency virus type 1 group M subtype D (isolate Z84)</name>
    <name type="common">HIV-1</name>
    <dbReference type="NCBI Taxonomy" id="11681"/>
    <lineage>
        <taxon>Viruses</taxon>
        <taxon>Riboviria</taxon>
        <taxon>Pararnavirae</taxon>
        <taxon>Artverviricota</taxon>
        <taxon>Revtraviricetes</taxon>
        <taxon>Ortervirales</taxon>
        <taxon>Retroviridae</taxon>
        <taxon>Orthoretrovirinae</taxon>
        <taxon>Lentivirus</taxon>
        <taxon>Human immunodeficiency virus type 1</taxon>
    </lineage>
</organism>
<feature type="chain" id="PRO_0000085413" description="Protein Vpu">
    <location>
        <begin position="1" status="less than"/>
        <end position="37"/>
    </location>
</feature>
<feature type="region of interest" description="Disordered" evidence="2">
    <location>
        <begin position="1"/>
        <end position="37"/>
    </location>
</feature>
<feature type="compositionally biased region" description="Basic and acidic residues" evidence="2">
    <location>
        <begin position="26"/>
        <end position="37"/>
    </location>
</feature>
<feature type="modified residue" description="Phosphoserine; by host CK2" evidence="1">
    <location>
        <position position="9"/>
    </location>
</feature>
<feature type="modified residue" description="Phosphoserine; by host CK2" evidence="1">
    <location>
        <position position="13"/>
    </location>
</feature>
<feature type="non-terminal residue">
    <location>
        <position position="1"/>
    </location>
</feature>
<accession>P08807</accession>
<proteinExistence type="inferred from homology"/>
<keyword id="KW-0014">AIDS</keyword>
<keyword id="KW-0053">Apoptosis</keyword>
<keyword id="KW-1043">Host membrane</keyword>
<keyword id="KW-0945">Host-virus interaction</keyword>
<keyword id="KW-0407">Ion channel</keyword>
<keyword id="KW-0406">Ion transport</keyword>
<keyword id="KW-0472">Membrane</keyword>
<keyword id="KW-0597">Phosphoprotein</keyword>
<keyword id="KW-0812">Transmembrane</keyword>
<keyword id="KW-0813">Transport</keyword>
<sequence length="37" mass="4131">NQSERAEDSGNESDGDKDELSTLVEMGHHAPWDIDDM</sequence>
<reference key="1">
    <citation type="journal article" date="1988" name="AIDS Res. Hum. Retroviruses">
        <title>Nucleotide sequence analysis of the env gene of a new Zairian isolate of HIV-1.</title>
        <authorList>
            <person name="Yourno J."/>
            <person name="Josephs S.F."/>
            <person name="Reitz M.S. Jr."/>
            <person name="Zagury D."/>
            <person name="Wong-Staal F."/>
            <person name="Gallo R.C."/>
        </authorList>
    </citation>
    <scope>NUCLEOTIDE SEQUENCE [GENOMIC RNA]</scope>
</reference>
<gene>
    <name type="primary">vpu</name>
</gene>
<dbReference type="EMBL" id="J03653">
    <property type="protein sequence ID" value="AAA44683.1"/>
    <property type="molecule type" value="Genomic_RNA"/>
</dbReference>
<dbReference type="GO" id="GO:0033644">
    <property type="term" value="C:host cell membrane"/>
    <property type="evidence" value="ECO:0007669"/>
    <property type="project" value="UniProtKB-SubCell"/>
</dbReference>
<dbReference type="GO" id="GO:0016020">
    <property type="term" value="C:membrane"/>
    <property type="evidence" value="ECO:0007669"/>
    <property type="project" value="UniProtKB-KW"/>
</dbReference>
<dbReference type="GO" id="GO:0042609">
    <property type="term" value="F:CD4 receptor binding"/>
    <property type="evidence" value="ECO:0007669"/>
    <property type="project" value="InterPro"/>
</dbReference>
<dbReference type="GO" id="GO:0005261">
    <property type="term" value="F:monoatomic cation channel activity"/>
    <property type="evidence" value="ECO:0007669"/>
    <property type="project" value="InterPro"/>
</dbReference>
<dbReference type="GO" id="GO:0032801">
    <property type="term" value="P:receptor catabolic process"/>
    <property type="evidence" value="ECO:0007669"/>
    <property type="project" value="InterPro"/>
</dbReference>
<dbReference type="GO" id="GO:0019076">
    <property type="term" value="P:viral release from host cell"/>
    <property type="evidence" value="ECO:0007669"/>
    <property type="project" value="InterPro"/>
</dbReference>
<dbReference type="Gene3D" id="1.10.195.10">
    <property type="entry name" value="HIV-1 VPU cytoplasmic domain"/>
    <property type="match status" value="1"/>
</dbReference>
<dbReference type="InterPro" id="IPR008187">
    <property type="entry name" value="Vpu"/>
</dbReference>
<dbReference type="InterPro" id="IPR009032">
    <property type="entry name" value="Vpu_cyt_dom_sf"/>
</dbReference>
<dbReference type="Pfam" id="PF00558">
    <property type="entry name" value="Vpu"/>
    <property type="match status" value="1"/>
</dbReference>
<dbReference type="SUPFAM" id="SSF57647">
    <property type="entry name" value="HIV-1 VPU cytoplasmic domain"/>
    <property type="match status" value="1"/>
</dbReference>
<protein>
    <recommendedName>
        <fullName>Protein Vpu</fullName>
    </recommendedName>
    <alternativeName>
        <fullName>U ORF protein</fullName>
    </alternativeName>
    <alternativeName>
        <fullName>Viral protein U</fullName>
    </alternativeName>
</protein>
<evidence type="ECO:0000250" key="1"/>
<evidence type="ECO:0000256" key="2">
    <source>
        <dbReference type="SAM" id="MobiDB-lite"/>
    </source>
</evidence>
<evidence type="ECO:0000305" key="3"/>
<name>VPU_HV1Z8</name>